<protein>
    <recommendedName>
        <fullName evidence="1">Serine O-succinyltransferase</fullName>
        <shortName evidence="1">SST</shortName>
        <ecNumber evidence="1">2.3.1.-</ecNumber>
    </recommendedName>
</protein>
<feature type="chain" id="PRO_1000115237" description="Serine O-succinyltransferase">
    <location>
        <begin position="1"/>
        <end position="380"/>
    </location>
</feature>
<feature type="domain" description="AB hydrolase-1" evidence="1">
    <location>
        <begin position="45"/>
        <end position="365"/>
    </location>
</feature>
<feature type="region of interest" description="Important for substrate specificity" evidence="1">
    <location>
        <begin position="52"/>
        <end position="55"/>
    </location>
</feature>
<feature type="active site" description="Nucleophile" evidence="1">
    <location>
        <position position="149"/>
    </location>
</feature>
<feature type="active site" evidence="1">
    <location>
        <position position="326"/>
    </location>
</feature>
<feature type="active site" evidence="1">
    <location>
        <position position="359"/>
    </location>
</feature>
<feature type="binding site" evidence="1">
    <location>
        <position position="218"/>
    </location>
    <ligand>
        <name>substrate</name>
    </ligand>
</feature>
<feature type="binding site" evidence="1">
    <location>
        <position position="360"/>
    </location>
    <ligand>
        <name>substrate</name>
    </ligand>
</feature>
<feature type="site" description="Important for acyl-CoA specificity" evidence="1">
    <location>
        <position position="186"/>
    </location>
</feature>
<reference key="1">
    <citation type="journal article" date="2008" name="J. Biotechnol.">
        <title>The genome of Xanthomonas campestris pv. campestris B100 and its use for the reconstruction of metabolic pathways involved in xanthan biosynthesis.</title>
        <authorList>
            <person name="Vorhoelter F.-J."/>
            <person name="Schneiker S."/>
            <person name="Goesmann A."/>
            <person name="Krause L."/>
            <person name="Bekel T."/>
            <person name="Kaiser O."/>
            <person name="Linke B."/>
            <person name="Patschkowski T."/>
            <person name="Rueckert C."/>
            <person name="Schmid J."/>
            <person name="Sidhu V.K."/>
            <person name="Sieber V."/>
            <person name="Tauch A."/>
            <person name="Watt S.A."/>
            <person name="Weisshaar B."/>
            <person name="Becker A."/>
            <person name="Niehaus K."/>
            <person name="Puehler A."/>
        </authorList>
    </citation>
    <scope>NUCLEOTIDE SEQUENCE [LARGE SCALE GENOMIC DNA]</scope>
    <source>
        <strain>B100</strain>
    </source>
</reference>
<keyword id="KW-0012">Acyltransferase</keyword>
<keyword id="KW-0028">Amino-acid biosynthesis</keyword>
<keyword id="KW-0198">Cysteine biosynthesis</keyword>
<keyword id="KW-0963">Cytoplasm</keyword>
<keyword id="KW-0808">Transferase</keyword>
<organism>
    <name type="scientific">Xanthomonas campestris pv. campestris (strain B100)</name>
    <dbReference type="NCBI Taxonomy" id="509169"/>
    <lineage>
        <taxon>Bacteria</taxon>
        <taxon>Pseudomonadati</taxon>
        <taxon>Pseudomonadota</taxon>
        <taxon>Gammaproteobacteria</taxon>
        <taxon>Lysobacterales</taxon>
        <taxon>Lysobacteraceae</taxon>
        <taxon>Xanthomonas</taxon>
    </lineage>
</organism>
<accession>B0RS70</accession>
<proteinExistence type="inferred from homology"/>
<gene>
    <name type="primary">metX</name>
    <name type="ordered locus">xcc-b100_1952</name>
</gene>
<comment type="function">
    <text evidence="1">Transfers a succinyl group from succinyl-CoA to L-serine, forming succinyl-L-serine.</text>
</comment>
<comment type="catalytic activity">
    <reaction evidence="1">
        <text>succinyl-CoA + L-serine = O-succinyl-L-serine + CoA</text>
        <dbReference type="Rhea" id="RHEA:52820"/>
        <dbReference type="ChEBI" id="CHEBI:33384"/>
        <dbReference type="ChEBI" id="CHEBI:57287"/>
        <dbReference type="ChEBI" id="CHEBI:57292"/>
        <dbReference type="ChEBI" id="CHEBI:136856"/>
    </reaction>
</comment>
<comment type="pathway">
    <text evidence="1">Amino-acid biosynthesis; L-cysteine biosynthesis; L-cysteine from L-serine: step 1/2.</text>
</comment>
<comment type="subunit">
    <text evidence="1">Homodimer.</text>
</comment>
<comment type="subcellular location">
    <subcellularLocation>
        <location evidence="1">Cytoplasm</location>
    </subcellularLocation>
</comment>
<comment type="similarity">
    <text evidence="1">Belongs to the AB hydrolase superfamily. MetX family.</text>
</comment>
<name>SST_XANCB</name>
<evidence type="ECO:0000255" key="1">
    <source>
        <dbReference type="HAMAP-Rule" id="MF_00296"/>
    </source>
</evidence>
<sequence length="380" mass="41031">MTEFIPTGTRFHALPSPLPMKRGGVLHQARVAYETWGTLDADHGNAVLIVTGLSPNAHAAANADNPEPGWWEAMVGPGKPIDTDRWFVVCVNSLGSCKGSTGPASIDPATGAPYRLSFPELSIEDVADAAADVVRALGIAQLACLIGNSMGGMTALALLLRHPGIARSHINISGSAQALPFSIAIRSLQREAIRLDPHWNGGHYDDVQYPESGMRMARKLGVITYRSALEWDGRFGRVRLDSELTAEDPFGLEFQVESYLEGHARRFVRFFDPNCYLYLSRSMDWFDLAEYAPDTRADAAAPESGVLAGLAQIRIARALAIGANTDILFPVQQQEQIAEGLRAGGADAQFLGLDSPQGHDAFLVDFARFGPAVRAFLADC</sequence>
<dbReference type="EC" id="2.3.1.-" evidence="1"/>
<dbReference type="EMBL" id="AM920689">
    <property type="protein sequence ID" value="CAP51305.1"/>
    <property type="molecule type" value="Genomic_DNA"/>
</dbReference>
<dbReference type="SMR" id="B0RS70"/>
<dbReference type="ESTHER" id="xanca-METX">
    <property type="family name" value="Homoserine_transacetylase"/>
</dbReference>
<dbReference type="KEGG" id="xca:xcc-b100_1952"/>
<dbReference type="HOGENOM" id="CLU_028760_1_2_6"/>
<dbReference type="UniPathway" id="UPA00136">
    <property type="reaction ID" value="UER00199"/>
</dbReference>
<dbReference type="Proteomes" id="UP000001188">
    <property type="component" value="Chromosome"/>
</dbReference>
<dbReference type="GO" id="GO:0005737">
    <property type="term" value="C:cytoplasm"/>
    <property type="evidence" value="ECO:0007669"/>
    <property type="project" value="UniProtKB-SubCell"/>
</dbReference>
<dbReference type="GO" id="GO:0004414">
    <property type="term" value="F:homoserine O-acetyltransferase activity"/>
    <property type="evidence" value="ECO:0007669"/>
    <property type="project" value="TreeGrafter"/>
</dbReference>
<dbReference type="GO" id="GO:0160210">
    <property type="term" value="F:L-serine O-succinyltransferase activity"/>
    <property type="evidence" value="ECO:0007669"/>
    <property type="project" value="RHEA"/>
</dbReference>
<dbReference type="GO" id="GO:0006535">
    <property type="term" value="P:cysteine biosynthetic process from serine"/>
    <property type="evidence" value="ECO:0007669"/>
    <property type="project" value="UniProtKB-UniRule"/>
</dbReference>
<dbReference type="GO" id="GO:0009092">
    <property type="term" value="P:homoserine metabolic process"/>
    <property type="evidence" value="ECO:0007669"/>
    <property type="project" value="TreeGrafter"/>
</dbReference>
<dbReference type="GO" id="GO:0009086">
    <property type="term" value="P:methionine biosynthetic process"/>
    <property type="evidence" value="ECO:0007669"/>
    <property type="project" value="TreeGrafter"/>
</dbReference>
<dbReference type="Gene3D" id="1.10.1740.110">
    <property type="match status" value="1"/>
</dbReference>
<dbReference type="Gene3D" id="3.40.50.1820">
    <property type="entry name" value="alpha/beta hydrolase"/>
    <property type="match status" value="1"/>
</dbReference>
<dbReference type="HAMAP" id="MF_00296">
    <property type="entry name" value="MetX_acyltransf"/>
    <property type="match status" value="1"/>
</dbReference>
<dbReference type="InterPro" id="IPR000073">
    <property type="entry name" value="AB_hydrolase_1"/>
</dbReference>
<dbReference type="InterPro" id="IPR029058">
    <property type="entry name" value="AB_hydrolase_fold"/>
</dbReference>
<dbReference type="InterPro" id="IPR008220">
    <property type="entry name" value="HAT_MetX-like"/>
</dbReference>
<dbReference type="NCBIfam" id="TIGR01392">
    <property type="entry name" value="homoserO_Ac_trn"/>
    <property type="match status" value="1"/>
</dbReference>
<dbReference type="NCBIfam" id="NF001209">
    <property type="entry name" value="PRK00175.1"/>
    <property type="match status" value="1"/>
</dbReference>
<dbReference type="PANTHER" id="PTHR32268">
    <property type="entry name" value="HOMOSERINE O-ACETYLTRANSFERASE"/>
    <property type="match status" value="1"/>
</dbReference>
<dbReference type="PANTHER" id="PTHR32268:SF11">
    <property type="entry name" value="HOMOSERINE O-ACETYLTRANSFERASE"/>
    <property type="match status" value="1"/>
</dbReference>
<dbReference type="Pfam" id="PF00561">
    <property type="entry name" value="Abhydrolase_1"/>
    <property type="match status" value="1"/>
</dbReference>
<dbReference type="PIRSF" id="PIRSF000443">
    <property type="entry name" value="Homoser_Ac_trans"/>
    <property type="match status" value="1"/>
</dbReference>
<dbReference type="SUPFAM" id="SSF53474">
    <property type="entry name" value="alpha/beta-Hydrolases"/>
    <property type="match status" value="1"/>
</dbReference>